<feature type="chain" id="PRO_0000107865" description="Phosphocarrier protein HPr">
    <location>
        <begin position="1"/>
        <end position="89"/>
    </location>
</feature>
<feature type="domain" description="HPr" evidence="2">
    <location>
        <begin position="1"/>
        <end position="88"/>
    </location>
</feature>
<feature type="active site" description="Pros-phosphohistidine intermediate" evidence="2">
    <location>
        <position position="15"/>
    </location>
</feature>
<feature type="modified residue" description="Phosphoserine; by HPrK/P" evidence="2">
    <location>
        <position position="46"/>
    </location>
</feature>
<proteinExistence type="inferred from homology"/>
<accession>P65876</accession>
<accession>A1IPL3</accession>
<accession>Q9JQN1</accession>
<gene>
    <name type="primary">ptsH</name>
    <name type="ordered locus">NMA0391</name>
</gene>
<dbReference type="EMBL" id="AL157959">
    <property type="protein sequence ID" value="CAM07683.1"/>
    <property type="molecule type" value="Genomic_DNA"/>
</dbReference>
<dbReference type="RefSeq" id="WP_002218178.1">
    <property type="nucleotide sequence ID" value="NC_003116.1"/>
</dbReference>
<dbReference type="SMR" id="P65876"/>
<dbReference type="EnsemblBacteria" id="CAM07683">
    <property type="protein sequence ID" value="CAM07683"/>
    <property type="gene ID" value="NMA0391"/>
</dbReference>
<dbReference type="KEGG" id="nma:NMA0391"/>
<dbReference type="HOGENOM" id="CLU_136230_1_1_4"/>
<dbReference type="Proteomes" id="UP000000626">
    <property type="component" value="Chromosome"/>
</dbReference>
<dbReference type="GO" id="GO:0005737">
    <property type="term" value="C:cytoplasm"/>
    <property type="evidence" value="ECO:0007669"/>
    <property type="project" value="UniProtKB-SubCell"/>
</dbReference>
<dbReference type="GO" id="GO:0009401">
    <property type="term" value="P:phosphoenolpyruvate-dependent sugar phosphotransferase system"/>
    <property type="evidence" value="ECO:0007669"/>
    <property type="project" value="UniProtKB-KW"/>
</dbReference>
<dbReference type="CDD" id="cd00367">
    <property type="entry name" value="PTS-HPr_like"/>
    <property type="match status" value="1"/>
</dbReference>
<dbReference type="Gene3D" id="3.30.1340.10">
    <property type="entry name" value="HPr-like"/>
    <property type="match status" value="1"/>
</dbReference>
<dbReference type="InterPro" id="IPR050399">
    <property type="entry name" value="HPr"/>
</dbReference>
<dbReference type="InterPro" id="IPR000032">
    <property type="entry name" value="HPr-like"/>
</dbReference>
<dbReference type="InterPro" id="IPR035895">
    <property type="entry name" value="HPr-like_sf"/>
</dbReference>
<dbReference type="InterPro" id="IPR001020">
    <property type="entry name" value="PTS_HPr_His_P_site"/>
</dbReference>
<dbReference type="InterPro" id="IPR002114">
    <property type="entry name" value="PTS_HPr_Ser_P_site"/>
</dbReference>
<dbReference type="NCBIfam" id="TIGR01003">
    <property type="entry name" value="PTS_HPr_family"/>
    <property type="match status" value="1"/>
</dbReference>
<dbReference type="PANTHER" id="PTHR33705">
    <property type="entry name" value="PHOSPHOCARRIER PROTEIN HPR"/>
    <property type="match status" value="1"/>
</dbReference>
<dbReference type="PANTHER" id="PTHR33705:SF2">
    <property type="entry name" value="PHOSPHOCARRIER PROTEIN NPR"/>
    <property type="match status" value="1"/>
</dbReference>
<dbReference type="Pfam" id="PF00381">
    <property type="entry name" value="PTS-HPr"/>
    <property type="match status" value="1"/>
</dbReference>
<dbReference type="PRINTS" id="PR00107">
    <property type="entry name" value="PHOSPHOCPHPR"/>
</dbReference>
<dbReference type="SUPFAM" id="SSF55594">
    <property type="entry name" value="HPr-like"/>
    <property type="match status" value="1"/>
</dbReference>
<dbReference type="PROSITE" id="PS51350">
    <property type="entry name" value="PTS_HPR_DOM"/>
    <property type="match status" value="1"/>
</dbReference>
<dbReference type="PROSITE" id="PS00369">
    <property type="entry name" value="PTS_HPR_HIS"/>
    <property type="match status" value="1"/>
</dbReference>
<dbReference type="PROSITE" id="PS00589">
    <property type="entry name" value="PTS_HPR_SER"/>
    <property type="match status" value="1"/>
</dbReference>
<reference key="1">
    <citation type="journal article" date="2000" name="Nature">
        <title>Complete DNA sequence of a serogroup A strain of Neisseria meningitidis Z2491.</title>
        <authorList>
            <person name="Parkhill J."/>
            <person name="Achtman M."/>
            <person name="James K.D."/>
            <person name="Bentley S.D."/>
            <person name="Churcher C.M."/>
            <person name="Klee S.R."/>
            <person name="Morelli G."/>
            <person name="Basham D."/>
            <person name="Brown D."/>
            <person name="Chillingworth T."/>
            <person name="Davies R.M."/>
            <person name="Davis P."/>
            <person name="Devlin K."/>
            <person name="Feltwell T."/>
            <person name="Hamlin N."/>
            <person name="Holroyd S."/>
            <person name="Jagels K."/>
            <person name="Leather S."/>
            <person name="Moule S."/>
            <person name="Mungall K.L."/>
            <person name="Quail M.A."/>
            <person name="Rajandream M.A."/>
            <person name="Rutherford K.M."/>
            <person name="Simmonds M."/>
            <person name="Skelton J."/>
            <person name="Whitehead S."/>
            <person name="Spratt B.G."/>
            <person name="Barrell B.G."/>
        </authorList>
    </citation>
    <scope>NUCLEOTIDE SEQUENCE [LARGE SCALE GENOMIC DNA]</scope>
    <source>
        <strain>DSM 15465 / Z2491</strain>
    </source>
</reference>
<sequence length="89" mass="9693">MLKQSIEIINKLGLHARASNKFTQTASQFKSEVWVTKNDSRVNGKSIMGLMMLAAAKGTVIELETDGADEAEAMRALTDLINGYFGEGE</sequence>
<name>PTHP_NEIMA</name>
<keyword id="KW-0963">Cytoplasm</keyword>
<keyword id="KW-0597">Phosphoprotein</keyword>
<keyword id="KW-0598">Phosphotransferase system</keyword>
<keyword id="KW-0762">Sugar transport</keyword>
<keyword id="KW-0813">Transport</keyword>
<evidence type="ECO:0000250" key="1"/>
<evidence type="ECO:0000255" key="2">
    <source>
        <dbReference type="PROSITE-ProRule" id="PRU00681"/>
    </source>
</evidence>
<evidence type="ECO:0000305" key="3"/>
<organism>
    <name type="scientific">Neisseria meningitidis serogroup A / serotype 4A (strain DSM 15465 / Z2491)</name>
    <dbReference type="NCBI Taxonomy" id="122587"/>
    <lineage>
        <taxon>Bacteria</taxon>
        <taxon>Pseudomonadati</taxon>
        <taxon>Pseudomonadota</taxon>
        <taxon>Betaproteobacteria</taxon>
        <taxon>Neisseriales</taxon>
        <taxon>Neisseriaceae</taxon>
        <taxon>Neisseria</taxon>
    </lineage>
</organism>
<comment type="function">
    <text evidence="1">General (non sugar-specific) component of the phosphoenolpyruvate-dependent sugar phosphotransferase system (sugar PTS). This major carbohydrate active-transport system catalyzes the phosphorylation of incoming sugar substrates concomitantly with their translocation across the cell membrane. The phosphoryl group from phosphoenolpyruvate (PEP) is transferred to the phosphoryl carrier protein HPr by enzyme I. Phospho-HPr then transfers it to the PTS EIIA domain.</text>
</comment>
<comment type="activity regulation">
    <text evidence="1">Phosphorylation on Ser-46 inhibits the phosphoryl transfer from enzyme I to HPr.</text>
</comment>
<comment type="subcellular location">
    <subcellularLocation>
        <location evidence="1">Cytoplasm</location>
    </subcellularLocation>
</comment>
<comment type="similarity">
    <text evidence="3">Belongs to the HPr family.</text>
</comment>
<protein>
    <recommendedName>
        <fullName>Phosphocarrier protein HPr</fullName>
    </recommendedName>
    <alternativeName>
        <fullName>Histidine-containing protein</fullName>
    </alternativeName>
</protein>